<proteinExistence type="inferred from homology"/>
<evidence type="ECO:0000255" key="1">
    <source>
        <dbReference type="HAMAP-Rule" id="MF_00208"/>
    </source>
</evidence>
<accession>P57316</accession>
<organism>
    <name type="scientific">Buchnera aphidicola subsp. Acyrthosiphon pisum (strain APS)</name>
    <name type="common">Acyrthosiphon pisum symbiotic bacterium</name>
    <dbReference type="NCBI Taxonomy" id="107806"/>
    <lineage>
        <taxon>Bacteria</taxon>
        <taxon>Pseudomonadati</taxon>
        <taxon>Pseudomonadota</taxon>
        <taxon>Gammaproteobacteria</taxon>
        <taxon>Enterobacterales</taxon>
        <taxon>Erwiniaceae</taxon>
        <taxon>Buchnera</taxon>
    </lineage>
</organism>
<dbReference type="EC" id="6.3.2.13" evidence="1"/>
<dbReference type="EMBL" id="BA000003">
    <property type="protein sequence ID" value="BAB12937.1"/>
    <property type="molecule type" value="Genomic_DNA"/>
</dbReference>
<dbReference type="RefSeq" id="NP_240051.1">
    <property type="nucleotide sequence ID" value="NC_002528.1"/>
</dbReference>
<dbReference type="RefSeq" id="WP_010896012.1">
    <property type="nucleotide sequence ID" value="NC_002528.1"/>
</dbReference>
<dbReference type="SMR" id="P57316"/>
<dbReference type="STRING" id="563178.BUAP5A_217"/>
<dbReference type="EnsemblBacteria" id="BAB12937">
    <property type="protein sequence ID" value="BAB12937"/>
    <property type="gene ID" value="BAB12937"/>
</dbReference>
<dbReference type="KEGG" id="buc:BU221"/>
<dbReference type="PATRIC" id="fig|107806.10.peg.234"/>
<dbReference type="eggNOG" id="COG0769">
    <property type="taxonomic scope" value="Bacteria"/>
</dbReference>
<dbReference type="HOGENOM" id="CLU_022291_3_2_6"/>
<dbReference type="UniPathway" id="UPA00219"/>
<dbReference type="Proteomes" id="UP000001806">
    <property type="component" value="Chromosome"/>
</dbReference>
<dbReference type="GO" id="GO:0005737">
    <property type="term" value="C:cytoplasm"/>
    <property type="evidence" value="ECO:0007669"/>
    <property type="project" value="UniProtKB-SubCell"/>
</dbReference>
<dbReference type="GO" id="GO:0005524">
    <property type="term" value="F:ATP binding"/>
    <property type="evidence" value="ECO:0007669"/>
    <property type="project" value="UniProtKB-UniRule"/>
</dbReference>
<dbReference type="GO" id="GO:0000287">
    <property type="term" value="F:magnesium ion binding"/>
    <property type="evidence" value="ECO:0007669"/>
    <property type="project" value="UniProtKB-UniRule"/>
</dbReference>
<dbReference type="GO" id="GO:0008765">
    <property type="term" value="F:UDP-N-acetylmuramoylalanyl-D-glutamate-2,6-diaminopimelate ligase activity"/>
    <property type="evidence" value="ECO:0007669"/>
    <property type="project" value="UniProtKB-UniRule"/>
</dbReference>
<dbReference type="GO" id="GO:0051301">
    <property type="term" value="P:cell division"/>
    <property type="evidence" value="ECO:0007669"/>
    <property type="project" value="UniProtKB-KW"/>
</dbReference>
<dbReference type="GO" id="GO:0071555">
    <property type="term" value="P:cell wall organization"/>
    <property type="evidence" value="ECO:0007669"/>
    <property type="project" value="UniProtKB-KW"/>
</dbReference>
<dbReference type="GO" id="GO:0009252">
    <property type="term" value="P:peptidoglycan biosynthetic process"/>
    <property type="evidence" value="ECO:0007669"/>
    <property type="project" value="UniProtKB-UniRule"/>
</dbReference>
<dbReference type="GO" id="GO:0008360">
    <property type="term" value="P:regulation of cell shape"/>
    <property type="evidence" value="ECO:0007669"/>
    <property type="project" value="UniProtKB-KW"/>
</dbReference>
<dbReference type="Gene3D" id="3.90.190.20">
    <property type="entry name" value="Mur ligase, C-terminal domain"/>
    <property type="match status" value="1"/>
</dbReference>
<dbReference type="Gene3D" id="3.40.1190.10">
    <property type="entry name" value="Mur-like, catalytic domain"/>
    <property type="match status" value="1"/>
</dbReference>
<dbReference type="Gene3D" id="3.40.1390.10">
    <property type="entry name" value="MurE/MurF, N-terminal domain"/>
    <property type="match status" value="1"/>
</dbReference>
<dbReference type="HAMAP" id="MF_00208">
    <property type="entry name" value="MurE"/>
    <property type="match status" value="1"/>
</dbReference>
<dbReference type="InterPro" id="IPR036565">
    <property type="entry name" value="Mur-like_cat_sf"/>
</dbReference>
<dbReference type="InterPro" id="IPR004101">
    <property type="entry name" value="Mur_ligase_C"/>
</dbReference>
<dbReference type="InterPro" id="IPR036615">
    <property type="entry name" value="Mur_ligase_C_dom_sf"/>
</dbReference>
<dbReference type="InterPro" id="IPR013221">
    <property type="entry name" value="Mur_ligase_cen"/>
</dbReference>
<dbReference type="InterPro" id="IPR000713">
    <property type="entry name" value="Mur_ligase_N"/>
</dbReference>
<dbReference type="InterPro" id="IPR035911">
    <property type="entry name" value="MurE/MurF_N"/>
</dbReference>
<dbReference type="InterPro" id="IPR005761">
    <property type="entry name" value="UDP-N-AcMur-Glu-dNH2Pim_ligase"/>
</dbReference>
<dbReference type="NCBIfam" id="TIGR01085">
    <property type="entry name" value="murE"/>
    <property type="match status" value="1"/>
</dbReference>
<dbReference type="NCBIfam" id="NF001123">
    <property type="entry name" value="PRK00139.1-1"/>
    <property type="match status" value="1"/>
</dbReference>
<dbReference type="NCBIfam" id="NF001126">
    <property type="entry name" value="PRK00139.1-4"/>
    <property type="match status" value="1"/>
</dbReference>
<dbReference type="PANTHER" id="PTHR23135">
    <property type="entry name" value="MUR LIGASE FAMILY MEMBER"/>
    <property type="match status" value="1"/>
</dbReference>
<dbReference type="PANTHER" id="PTHR23135:SF4">
    <property type="entry name" value="UDP-N-ACETYLMURAMOYL-L-ALANYL-D-GLUTAMATE--2,6-DIAMINOPIMELATE LIGASE MURE HOMOLOG, CHLOROPLASTIC"/>
    <property type="match status" value="1"/>
</dbReference>
<dbReference type="Pfam" id="PF01225">
    <property type="entry name" value="Mur_ligase"/>
    <property type="match status" value="1"/>
</dbReference>
<dbReference type="Pfam" id="PF02875">
    <property type="entry name" value="Mur_ligase_C"/>
    <property type="match status" value="1"/>
</dbReference>
<dbReference type="Pfam" id="PF08245">
    <property type="entry name" value="Mur_ligase_M"/>
    <property type="match status" value="1"/>
</dbReference>
<dbReference type="SUPFAM" id="SSF53623">
    <property type="entry name" value="MurD-like peptide ligases, catalytic domain"/>
    <property type="match status" value="1"/>
</dbReference>
<dbReference type="SUPFAM" id="SSF53244">
    <property type="entry name" value="MurD-like peptide ligases, peptide-binding domain"/>
    <property type="match status" value="1"/>
</dbReference>
<dbReference type="SUPFAM" id="SSF63418">
    <property type="entry name" value="MurE/MurF N-terminal domain"/>
    <property type="match status" value="1"/>
</dbReference>
<gene>
    <name evidence="1" type="primary">murE</name>
    <name type="ordered locus">BU221</name>
</gene>
<keyword id="KW-0067">ATP-binding</keyword>
<keyword id="KW-0131">Cell cycle</keyword>
<keyword id="KW-0132">Cell division</keyword>
<keyword id="KW-0133">Cell shape</keyword>
<keyword id="KW-0961">Cell wall biogenesis/degradation</keyword>
<keyword id="KW-0963">Cytoplasm</keyword>
<keyword id="KW-0436">Ligase</keyword>
<keyword id="KW-0460">Magnesium</keyword>
<keyword id="KW-0547">Nucleotide-binding</keyword>
<keyword id="KW-0573">Peptidoglycan synthesis</keyword>
<keyword id="KW-1185">Reference proteome</keyword>
<name>MURE_BUCAI</name>
<feature type="chain" id="PRO_0000101873" description="UDP-N-acetylmuramoyl-L-alanyl-D-glutamate--2,6-diaminopimelate ligase">
    <location>
        <begin position="1"/>
        <end position="497"/>
    </location>
</feature>
<feature type="short sequence motif" description="Meso-diaminopimelate recognition motif">
    <location>
        <begin position="416"/>
        <end position="419"/>
    </location>
</feature>
<feature type="binding site" evidence="1">
    <location>
        <position position="29"/>
    </location>
    <ligand>
        <name>UDP-N-acetyl-alpha-D-muramoyl-L-alanyl-D-glutamate</name>
        <dbReference type="ChEBI" id="CHEBI:83900"/>
    </ligand>
</feature>
<feature type="binding site" evidence="1">
    <location>
        <begin position="116"/>
        <end position="122"/>
    </location>
    <ligand>
        <name>ATP</name>
        <dbReference type="ChEBI" id="CHEBI:30616"/>
    </ligand>
</feature>
<feature type="binding site" evidence="1">
    <location>
        <position position="157"/>
    </location>
    <ligand>
        <name>UDP-N-acetyl-alpha-D-muramoyl-L-alanyl-D-glutamate</name>
        <dbReference type="ChEBI" id="CHEBI:83900"/>
    </ligand>
</feature>
<feature type="binding site" evidence="1">
    <location>
        <begin position="158"/>
        <end position="159"/>
    </location>
    <ligand>
        <name>UDP-N-acetyl-alpha-D-muramoyl-L-alanyl-D-glutamate</name>
        <dbReference type="ChEBI" id="CHEBI:83900"/>
    </ligand>
</feature>
<feature type="binding site" evidence="1">
    <location>
        <position position="185"/>
    </location>
    <ligand>
        <name>UDP-N-acetyl-alpha-D-muramoyl-L-alanyl-D-glutamate</name>
        <dbReference type="ChEBI" id="CHEBI:83900"/>
    </ligand>
</feature>
<feature type="binding site" evidence="1">
    <location>
        <position position="191"/>
    </location>
    <ligand>
        <name>UDP-N-acetyl-alpha-D-muramoyl-L-alanyl-D-glutamate</name>
        <dbReference type="ChEBI" id="CHEBI:83900"/>
    </ligand>
</feature>
<feature type="binding site" evidence="1">
    <location>
        <position position="193"/>
    </location>
    <ligand>
        <name>UDP-N-acetyl-alpha-D-muramoyl-L-alanyl-D-glutamate</name>
        <dbReference type="ChEBI" id="CHEBI:83900"/>
    </ligand>
</feature>
<feature type="binding site" evidence="1">
    <location>
        <position position="392"/>
    </location>
    <ligand>
        <name>meso-2,6-diaminopimelate</name>
        <dbReference type="ChEBI" id="CHEBI:57791"/>
    </ligand>
</feature>
<feature type="binding site" evidence="1">
    <location>
        <begin position="416"/>
        <end position="419"/>
    </location>
    <ligand>
        <name>meso-2,6-diaminopimelate</name>
        <dbReference type="ChEBI" id="CHEBI:57791"/>
    </ligand>
</feature>
<feature type="binding site" evidence="1">
    <location>
        <position position="467"/>
    </location>
    <ligand>
        <name>meso-2,6-diaminopimelate</name>
        <dbReference type="ChEBI" id="CHEBI:57791"/>
    </ligand>
</feature>
<feature type="binding site" evidence="1">
    <location>
        <position position="471"/>
    </location>
    <ligand>
        <name>meso-2,6-diaminopimelate</name>
        <dbReference type="ChEBI" id="CHEBI:57791"/>
    </ligand>
</feature>
<feature type="modified residue" description="N6-carboxylysine" evidence="1">
    <location>
        <position position="225"/>
    </location>
</feature>
<sequence length="497" mass="56983">MNKICLKYLLLPWIKNIPKKYISNLKMDSRTLTPGDLFIAVPGIKKDGRHFIVQAINKKAAAILCETKKKDKHGIFKYIKNVILIYFFKLSENVSLLANRFYKEPGKRLKIIGITGTNGKTTVTQLINQWSTILGTKTATMGTLGNGFYNSLQPTNNTTSSPIFIQLFLSKVLEKQAELVTMEVSSHGLIQHRVKEVPFYIAIFTNLTQDHLDYHENLEKYESAKWLLFSTHKVKKIILNADDQYGKIWLKKLLNFYTVAVTIQNRKQKKYSTKWINATNIEQNNNSIYITFESSWGTGRISSCLIGRFNVTNLLLSLACLLELGYSLSDLIHTSEKIIPVQGRMELFSYVKKPTFIIDYAHTPDALKKTLNAIHSHYQRYIWCIFGCGGERDQKKRPIMGAIAEKMSDKVIITNDNPRNEKEKKIIQDILNGCKNKEKILIIPDRKKAISYAYFGAKYHHIILIAGKGHEEKQIIQNRSINYSDKKIVLNLLGKNI</sequence>
<reference key="1">
    <citation type="journal article" date="2000" name="Nature">
        <title>Genome sequence of the endocellular bacterial symbiont of aphids Buchnera sp. APS.</title>
        <authorList>
            <person name="Shigenobu S."/>
            <person name="Watanabe H."/>
            <person name="Hattori M."/>
            <person name="Sakaki Y."/>
            <person name="Ishikawa H."/>
        </authorList>
    </citation>
    <scope>NUCLEOTIDE SEQUENCE [LARGE SCALE GENOMIC DNA]</scope>
    <source>
        <strain>APS</strain>
    </source>
</reference>
<protein>
    <recommendedName>
        <fullName evidence="1">UDP-N-acetylmuramoyl-L-alanyl-D-glutamate--2,6-diaminopimelate ligase</fullName>
        <ecNumber evidence="1">6.3.2.13</ecNumber>
    </recommendedName>
    <alternativeName>
        <fullName evidence="1">Meso-A2pm-adding enzyme</fullName>
    </alternativeName>
    <alternativeName>
        <fullName evidence="1">Meso-diaminopimelate-adding enzyme</fullName>
    </alternativeName>
    <alternativeName>
        <fullName evidence="1">UDP-MurNAc-L-Ala-D-Glu:meso-diaminopimelate ligase</fullName>
    </alternativeName>
    <alternativeName>
        <fullName evidence="1">UDP-MurNAc-tripeptide synthetase</fullName>
    </alternativeName>
    <alternativeName>
        <fullName evidence="1">UDP-N-acetylmuramyl-tripeptide synthetase</fullName>
    </alternativeName>
</protein>
<comment type="function">
    <text evidence="1">Catalyzes the addition of meso-diaminopimelic acid to the nucleotide precursor UDP-N-acetylmuramoyl-L-alanyl-D-glutamate (UMAG) in the biosynthesis of bacterial cell-wall peptidoglycan.</text>
</comment>
<comment type="catalytic activity">
    <reaction evidence="1">
        <text>UDP-N-acetyl-alpha-D-muramoyl-L-alanyl-D-glutamate + meso-2,6-diaminopimelate + ATP = UDP-N-acetyl-alpha-D-muramoyl-L-alanyl-gamma-D-glutamyl-meso-2,6-diaminopimelate + ADP + phosphate + H(+)</text>
        <dbReference type="Rhea" id="RHEA:23676"/>
        <dbReference type="ChEBI" id="CHEBI:15378"/>
        <dbReference type="ChEBI" id="CHEBI:30616"/>
        <dbReference type="ChEBI" id="CHEBI:43474"/>
        <dbReference type="ChEBI" id="CHEBI:57791"/>
        <dbReference type="ChEBI" id="CHEBI:83900"/>
        <dbReference type="ChEBI" id="CHEBI:83905"/>
        <dbReference type="ChEBI" id="CHEBI:456216"/>
        <dbReference type="EC" id="6.3.2.13"/>
    </reaction>
</comment>
<comment type="cofactor">
    <cofactor evidence="1">
        <name>Mg(2+)</name>
        <dbReference type="ChEBI" id="CHEBI:18420"/>
    </cofactor>
</comment>
<comment type="pathway">
    <text evidence="1">Cell wall biogenesis; peptidoglycan biosynthesis.</text>
</comment>
<comment type="subcellular location">
    <subcellularLocation>
        <location evidence="1">Cytoplasm</location>
    </subcellularLocation>
</comment>
<comment type="PTM">
    <text evidence="1">Carboxylation is probably crucial for Mg(2+) binding and, consequently, for the gamma-phosphate positioning of ATP.</text>
</comment>
<comment type="similarity">
    <text evidence="1">Belongs to the MurCDEF family. MurE subfamily.</text>
</comment>